<gene>
    <name evidence="1" type="primary">cysS</name>
    <name type="ordered locus">Caul_4529</name>
</gene>
<keyword id="KW-0030">Aminoacyl-tRNA synthetase</keyword>
<keyword id="KW-0067">ATP-binding</keyword>
<keyword id="KW-0963">Cytoplasm</keyword>
<keyword id="KW-0436">Ligase</keyword>
<keyword id="KW-0479">Metal-binding</keyword>
<keyword id="KW-0547">Nucleotide-binding</keyword>
<keyword id="KW-0648">Protein biosynthesis</keyword>
<keyword id="KW-0862">Zinc</keyword>
<evidence type="ECO:0000255" key="1">
    <source>
        <dbReference type="HAMAP-Rule" id="MF_00041"/>
    </source>
</evidence>
<proteinExistence type="inferred from homology"/>
<accession>B0T101</accession>
<comment type="catalytic activity">
    <reaction evidence="1">
        <text>tRNA(Cys) + L-cysteine + ATP = L-cysteinyl-tRNA(Cys) + AMP + diphosphate</text>
        <dbReference type="Rhea" id="RHEA:17773"/>
        <dbReference type="Rhea" id="RHEA-COMP:9661"/>
        <dbReference type="Rhea" id="RHEA-COMP:9679"/>
        <dbReference type="ChEBI" id="CHEBI:30616"/>
        <dbReference type="ChEBI" id="CHEBI:33019"/>
        <dbReference type="ChEBI" id="CHEBI:35235"/>
        <dbReference type="ChEBI" id="CHEBI:78442"/>
        <dbReference type="ChEBI" id="CHEBI:78517"/>
        <dbReference type="ChEBI" id="CHEBI:456215"/>
        <dbReference type="EC" id="6.1.1.16"/>
    </reaction>
</comment>
<comment type="cofactor">
    <cofactor evidence="1">
        <name>Zn(2+)</name>
        <dbReference type="ChEBI" id="CHEBI:29105"/>
    </cofactor>
    <text evidence="1">Binds 1 zinc ion per subunit.</text>
</comment>
<comment type="subunit">
    <text evidence="1">Monomer.</text>
</comment>
<comment type="subcellular location">
    <subcellularLocation>
        <location evidence="1">Cytoplasm</location>
    </subcellularLocation>
</comment>
<comment type="similarity">
    <text evidence="1">Belongs to the class-I aminoacyl-tRNA synthetase family.</text>
</comment>
<protein>
    <recommendedName>
        <fullName evidence="1">Cysteine--tRNA ligase</fullName>
        <ecNumber evidence="1">6.1.1.16</ecNumber>
    </recommendedName>
    <alternativeName>
        <fullName evidence="1">Cysteinyl-tRNA synthetase</fullName>
        <shortName evidence="1">CysRS</shortName>
    </alternativeName>
</protein>
<reference key="1">
    <citation type="submission" date="2008-01" db="EMBL/GenBank/DDBJ databases">
        <title>Complete sequence of chromosome of Caulobacter sp. K31.</title>
        <authorList>
            <consortium name="US DOE Joint Genome Institute"/>
            <person name="Copeland A."/>
            <person name="Lucas S."/>
            <person name="Lapidus A."/>
            <person name="Barry K."/>
            <person name="Glavina del Rio T."/>
            <person name="Dalin E."/>
            <person name="Tice H."/>
            <person name="Pitluck S."/>
            <person name="Bruce D."/>
            <person name="Goodwin L."/>
            <person name="Thompson L.S."/>
            <person name="Brettin T."/>
            <person name="Detter J.C."/>
            <person name="Han C."/>
            <person name="Schmutz J."/>
            <person name="Larimer F."/>
            <person name="Land M."/>
            <person name="Hauser L."/>
            <person name="Kyrpides N."/>
            <person name="Kim E."/>
            <person name="Stephens C."/>
            <person name="Richardson P."/>
        </authorList>
    </citation>
    <scope>NUCLEOTIDE SEQUENCE [LARGE SCALE GENOMIC DNA]</scope>
    <source>
        <strain>K31</strain>
    </source>
</reference>
<organism>
    <name type="scientific">Caulobacter sp. (strain K31)</name>
    <dbReference type="NCBI Taxonomy" id="366602"/>
    <lineage>
        <taxon>Bacteria</taxon>
        <taxon>Pseudomonadati</taxon>
        <taxon>Pseudomonadota</taxon>
        <taxon>Alphaproteobacteria</taxon>
        <taxon>Caulobacterales</taxon>
        <taxon>Caulobacteraceae</taxon>
        <taxon>Caulobacter</taxon>
    </lineage>
</organism>
<feature type="chain" id="PRO_1000074610" description="Cysteine--tRNA ligase">
    <location>
        <begin position="1"/>
        <end position="462"/>
    </location>
</feature>
<feature type="short sequence motif" description="'HIGH' region">
    <location>
        <begin position="31"/>
        <end position="41"/>
    </location>
</feature>
<feature type="short sequence motif" description="'KMSKS' region">
    <location>
        <begin position="269"/>
        <end position="273"/>
    </location>
</feature>
<feature type="binding site" evidence="1">
    <location>
        <position position="29"/>
    </location>
    <ligand>
        <name>Zn(2+)</name>
        <dbReference type="ChEBI" id="CHEBI:29105"/>
    </ligand>
</feature>
<feature type="binding site" evidence="1">
    <location>
        <position position="211"/>
    </location>
    <ligand>
        <name>Zn(2+)</name>
        <dbReference type="ChEBI" id="CHEBI:29105"/>
    </ligand>
</feature>
<feature type="binding site" evidence="1">
    <location>
        <position position="236"/>
    </location>
    <ligand>
        <name>Zn(2+)</name>
        <dbReference type="ChEBI" id="CHEBI:29105"/>
    </ligand>
</feature>
<feature type="binding site" evidence="1">
    <location>
        <position position="240"/>
    </location>
    <ligand>
        <name>Zn(2+)</name>
        <dbReference type="ChEBI" id="CHEBI:29105"/>
    </ligand>
</feature>
<feature type="binding site" evidence="1">
    <location>
        <position position="272"/>
    </location>
    <ligand>
        <name>ATP</name>
        <dbReference type="ChEBI" id="CHEBI:30616"/>
    </ligand>
</feature>
<dbReference type="EC" id="6.1.1.16" evidence="1"/>
<dbReference type="EMBL" id="CP000927">
    <property type="protein sequence ID" value="ABZ73649.1"/>
    <property type="molecule type" value="Genomic_DNA"/>
</dbReference>
<dbReference type="SMR" id="B0T101"/>
<dbReference type="STRING" id="366602.Caul_4529"/>
<dbReference type="KEGG" id="cak:Caul_4529"/>
<dbReference type="eggNOG" id="COG0215">
    <property type="taxonomic scope" value="Bacteria"/>
</dbReference>
<dbReference type="HOGENOM" id="CLU_013528_0_1_5"/>
<dbReference type="OrthoDB" id="9815130at2"/>
<dbReference type="GO" id="GO:0005829">
    <property type="term" value="C:cytosol"/>
    <property type="evidence" value="ECO:0007669"/>
    <property type="project" value="TreeGrafter"/>
</dbReference>
<dbReference type="GO" id="GO:0005524">
    <property type="term" value="F:ATP binding"/>
    <property type="evidence" value="ECO:0007669"/>
    <property type="project" value="UniProtKB-UniRule"/>
</dbReference>
<dbReference type="GO" id="GO:0004817">
    <property type="term" value="F:cysteine-tRNA ligase activity"/>
    <property type="evidence" value="ECO:0007669"/>
    <property type="project" value="UniProtKB-UniRule"/>
</dbReference>
<dbReference type="GO" id="GO:0008270">
    <property type="term" value="F:zinc ion binding"/>
    <property type="evidence" value="ECO:0007669"/>
    <property type="project" value="UniProtKB-UniRule"/>
</dbReference>
<dbReference type="GO" id="GO:0006423">
    <property type="term" value="P:cysteinyl-tRNA aminoacylation"/>
    <property type="evidence" value="ECO:0007669"/>
    <property type="project" value="UniProtKB-UniRule"/>
</dbReference>
<dbReference type="CDD" id="cd00672">
    <property type="entry name" value="CysRS_core"/>
    <property type="match status" value="1"/>
</dbReference>
<dbReference type="FunFam" id="3.40.50.620:FF:000068">
    <property type="entry name" value="Cysteine--tRNA ligase"/>
    <property type="match status" value="1"/>
</dbReference>
<dbReference type="Gene3D" id="1.20.120.1910">
    <property type="entry name" value="Cysteine-tRNA ligase, C-terminal anti-codon recognition domain"/>
    <property type="match status" value="1"/>
</dbReference>
<dbReference type="Gene3D" id="3.40.50.620">
    <property type="entry name" value="HUPs"/>
    <property type="match status" value="1"/>
</dbReference>
<dbReference type="HAMAP" id="MF_00041">
    <property type="entry name" value="Cys_tRNA_synth"/>
    <property type="match status" value="1"/>
</dbReference>
<dbReference type="InterPro" id="IPR015803">
    <property type="entry name" value="Cys-tRNA-ligase"/>
</dbReference>
<dbReference type="InterPro" id="IPR015273">
    <property type="entry name" value="Cys-tRNA-synt_Ia_DALR"/>
</dbReference>
<dbReference type="InterPro" id="IPR024909">
    <property type="entry name" value="Cys-tRNA/MSH_ligase"/>
</dbReference>
<dbReference type="InterPro" id="IPR056411">
    <property type="entry name" value="CysS_C"/>
</dbReference>
<dbReference type="InterPro" id="IPR014729">
    <property type="entry name" value="Rossmann-like_a/b/a_fold"/>
</dbReference>
<dbReference type="InterPro" id="IPR032678">
    <property type="entry name" value="tRNA-synt_1_cat_dom"/>
</dbReference>
<dbReference type="InterPro" id="IPR009080">
    <property type="entry name" value="tRNAsynth_Ia_anticodon-bd"/>
</dbReference>
<dbReference type="NCBIfam" id="TIGR00435">
    <property type="entry name" value="cysS"/>
    <property type="match status" value="1"/>
</dbReference>
<dbReference type="PANTHER" id="PTHR10890:SF3">
    <property type="entry name" value="CYSTEINE--TRNA LIGASE, CYTOPLASMIC"/>
    <property type="match status" value="1"/>
</dbReference>
<dbReference type="PANTHER" id="PTHR10890">
    <property type="entry name" value="CYSTEINYL-TRNA SYNTHETASE"/>
    <property type="match status" value="1"/>
</dbReference>
<dbReference type="Pfam" id="PF23493">
    <property type="entry name" value="CysS_C"/>
    <property type="match status" value="1"/>
</dbReference>
<dbReference type="Pfam" id="PF09190">
    <property type="entry name" value="DALR_2"/>
    <property type="match status" value="1"/>
</dbReference>
<dbReference type="Pfam" id="PF01406">
    <property type="entry name" value="tRNA-synt_1e"/>
    <property type="match status" value="1"/>
</dbReference>
<dbReference type="PRINTS" id="PR00983">
    <property type="entry name" value="TRNASYNTHCYS"/>
</dbReference>
<dbReference type="SMART" id="SM00840">
    <property type="entry name" value="DALR_2"/>
    <property type="match status" value="1"/>
</dbReference>
<dbReference type="SUPFAM" id="SSF47323">
    <property type="entry name" value="Anticodon-binding domain of a subclass of class I aminoacyl-tRNA synthetases"/>
    <property type="match status" value="1"/>
</dbReference>
<dbReference type="SUPFAM" id="SSF52374">
    <property type="entry name" value="Nucleotidylyl transferase"/>
    <property type="match status" value="1"/>
</dbReference>
<name>SYC_CAUSK</name>
<sequence>MTLKLYDTMAREKRDFVPADPGRVTMYVCGPTVYNHAHIGNFRPVVVFDVLFRLLRHVYGEDAVVYARNVTDVDDKINAKATAEGVEIKVITDRYLAAYHEDAAALLTLPPSLEPKATEHMGPIIEMIGELVANGSAYAAEGHVLFDTQAFPDYGQLSGRDLDDMIAGARVEVAPYKRHPADFVLWKPSKENEPEWDSPWGAGRPGWHIECSAMIDKTLGQTIDIHGGGIDLAFPHHENELAQSRCAHGAPVLANYWLHNGFLDMAGEKMSKSLGNVIIPHELLKTTPGEAIRWALLSGHYRQPLDWTPELIEQSKKALDRLYGALRRAKTVEAGESEPSDEVMAALSDDLNTPLAVSGFFELSSAIERAVTAGDELAITANKGRLLASAGLLGFLQADPDSWFEGDADDDLKAKVEDLLARRIAARTAKDWTAADAIRAEIDALGVVVMDGPAGATWRMKD</sequence>